<gene>
    <name evidence="7" type="primary">hbp1</name>
    <name type="ordered locus">lmo2186</name>
</gene>
<name>HBP1_LISMO</name>
<sequence length="207" mass="22267">MKKVLVFAAFIVLFSFSFLSTGLTAQAALKDGTYSVDYTVIQGDSDSASMANDYFDKPATVTVNGGKSTVSLQVNHSKWITGLWVEGNAVSVTSKNASSDTRKVSFPVSTLSNPVNAKIKVDIDDDDLNYHHEYQIKLRFDEGSAKALAGAVKSSDNNTTTPATKSDSSNKVTNPKSSDSSQMFLYGIIFVATGAGLILLKRRAIFK</sequence>
<keyword id="KW-0134">Cell wall</keyword>
<keyword id="KW-0903">Direct protein sequencing</keyword>
<keyword id="KW-0406">Ion transport</keyword>
<keyword id="KW-0408">Iron</keyword>
<keyword id="KW-0410">Iron transport</keyword>
<keyword id="KW-0572">Peptidoglycan-anchor</keyword>
<keyword id="KW-1185">Reference proteome</keyword>
<keyword id="KW-0964">Secreted</keyword>
<keyword id="KW-0732">Signal</keyword>
<keyword id="KW-0813">Transport</keyword>
<comment type="function">
    <text evidence="6">Binds both host hemin and hemoglobin with affinity in the nanomolar range and presumably directs it to membrane transporters.</text>
</comment>
<comment type="subcellular location">
    <subcellularLocation>
        <location evidence="4 5">Secreted</location>
        <location evidence="4 5">Cell wall</location>
        <topology evidence="4 5">Peptidoglycan-anchor</topology>
    </subcellularLocation>
    <subcellularLocation>
        <location evidence="5">Secreted</location>
    </subcellularLocation>
</comment>
<comment type="induction">
    <text evidence="4">Present in both exponential and stationary phase (at protein level).</text>
</comment>
<evidence type="ECO:0000255" key="1"/>
<evidence type="ECO:0000255" key="2">
    <source>
        <dbReference type="PROSITE-ProRule" id="PRU00337"/>
    </source>
</evidence>
<evidence type="ECO:0000256" key="3">
    <source>
        <dbReference type="SAM" id="MobiDB-lite"/>
    </source>
</evidence>
<evidence type="ECO:0000269" key="4">
    <source>
    </source>
</evidence>
<evidence type="ECO:0000269" key="5">
    <source>
    </source>
</evidence>
<evidence type="ECO:0000269" key="6">
    <source>
    </source>
</evidence>
<evidence type="ECO:0000303" key="7">
    <source>
    </source>
</evidence>
<evidence type="ECO:0000305" key="8"/>
<evidence type="ECO:0000305" key="9">
    <source>
    </source>
</evidence>
<feature type="signal peptide" evidence="1">
    <location>
        <begin position="1"/>
        <end position="27"/>
    </location>
</feature>
<feature type="chain" id="PRO_5004317273" description="Hemin/hemoglobin-binding protein 1" evidence="1">
    <location>
        <begin position="28"/>
        <end position="207"/>
    </location>
</feature>
<feature type="propeptide" id="PRO_0000445905" description="Removed by sortase B" evidence="4">
    <location>
        <begin position="178"/>
        <end position="207"/>
    </location>
</feature>
<feature type="domain" description="NEAT" evidence="2">
    <location>
        <begin position="29"/>
        <end position="148"/>
    </location>
</feature>
<feature type="region of interest" description="Disordered" evidence="3">
    <location>
        <begin position="151"/>
        <end position="178"/>
    </location>
</feature>
<feature type="short sequence motif" description="NPKXZ sorting signal" evidence="9">
    <location>
        <begin position="174"/>
        <end position="178"/>
    </location>
</feature>
<feature type="compositionally biased region" description="Polar residues" evidence="3">
    <location>
        <begin position="154"/>
        <end position="178"/>
    </location>
</feature>
<feature type="modified residue" description="Murein peptidoglycan amidated serine" evidence="9">
    <location>
        <position position="177"/>
    </location>
</feature>
<feature type="mutagenesis site" description="No change in attachment to the cell wall." evidence="5">
    <location>
        <begin position="170"/>
        <end position="173"/>
    </location>
</feature>
<feature type="mutagenesis site" description="No longer attached to the cell wall." evidence="5">
    <location>
        <begin position="175"/>
        <end position="178"/>
    </location>
</feature>
<feature type="mutagenesis site" description="No longer attached to the cell wall." evidence="5">
    <original>P</original>
    <variation>A</variation>
    <location>
        <position position="175"/>
    </location>
</feature>
<feature type="mutagenesis site" description="Attached to the cell wall." evidence="5">
    <original>KSS</original>
    <variation>QTN</variation>
    <location>
        <begin position="176"/>
        <end position="178"/>
    </location>
</feature>
<feature type="mutagenesis site" description="Attached to the cell wall." evidence="5">
    <original>K</original>
    <variation>Q</variation>
    <location>
        <position position="176"/>
    </location>
</feature>
<dbReference type="EMBL" id="AL591982">
    <property type="protein sequence ID" value="CAD00264.1"/>
    <property type="molecule type" value="Genomic_DNA"/>
</dbReference>
<dbReference type="PIR" id="AB1348">
    <property type="entry name" value="AB1348"/>
</dbReference>
<dbReference type="RefSeq" id="NP_465710.1">
    <property type="nucleotide sequence ID" value="NC_003210.1"/>
</dbReference>
<dbReference type="SMR" id="Q8Y585"/>
<dbReference type="STRING" id="169963.gene:17594877"/>
<dbReference type="PaxDb" id="169963-lmo2186"/>
<dbReference type="EnsemblBacteria" id="CAD00264">
    <property type="protein sequence ID" value="CAD00264"/>
    <property type="gene ID" value="CAD00264"/>
</dbReference>
<dbReference type="GeneID" id="984742"/>
<dbReference type="KEGG" id="lmo:lmo2186"/>
<dbReference type="PATRIC" id="fig|169963.11.peg.2238"/>
<dbReference type="eggNOG" id="COG5386">
    <property type="taxonomic scope" value="Bacteria"/>
</dbReference>
<dbReference type="HOGENOM" id="CLU_092243_0_1_9"/>
<dbReference type="OrthoDB" id="2413751at2"/>
<dbReference type="PhylomeDB" id="Q8Y585"/>
<dbReference type="BioCyc" id="LMON169963:LMO2186-MONOMER"/>
<dbReference type="Proteomes" id="UP000000817">
    <property type="component" value="Chromosome"/>
</dbReference>
<dbReference type="GO" id="GO:0005576">
    <property type="term" value="C:extracellular region"/>
    <property type="evidence" value="ECO:0007669"/>
    <property type="project" value="UniProtKB-SubCell"/>
</dbReference>
<dbReference type="GO" id="GO:0009274">
    <property type="term" value="C:peptidoglycan-based cell wall"/>
    <property type="evidence" value="ECO:0007669"/>
    <property type="project" value="InterPro"/>
</dbReference>
<dbReference type="GO" id="GO:0030492">
    <property type="term" value="F:hemoglobin binding"/>
    <property type="evidence" value="ECO:0007669"/>
    <property type="project" value="InterPro"/>
</dbReference>
<dbReference type="GO" id="GO:0071281">
    <property type="term" value="P:cellular response to iron ion"/>
    <property type="evidence" value="ECO:0000270"/>
    <property type="project" value="CollecTF"/>
</dbReference>
<dbReference type="GO" id="GO:0015886">
    <property type="term" value="P:heme transport"/>
    <property type="evidence" value="ECO:0007669"/>
    <property type="project" value="InterPro"/>
</dbReference>
<dbReference type="CDD" id="cd06920">
    <property type="entry name" value="NEAT"/>
    <property type="match status" value="1"/>
</dbReference>
<dbReference type="FunFam" id="2.60.40.1850:FF:000001">
    <property type="entry name" value="Heme uptake protein IsdC"/>
    <property type="match status" value="1"/>
</dbReference>
<dbReference type="Gene3D" id="2.60.40.1850">
    <property type="match status" value="1"/>
</dbReference>
<dbReference type="InterPro" id="IPR019909">
    <property type="entry name" value="Haem_uptake_protein_IsdC"/>
</dbReference>
<dbReference type="InterPro" id="IPR050436">
    <property type="entry name" value="IsdA"/>
</dbReference>
<dbReference type="InterPro" id="IPR006635">
    <property type="entry name" value="NEAT_dom"/>
</dbReference>
<dbReference type="InterPro" id="IPR037250">
    <property type="entry name" value="NEAT_dom_sf"/>
</dbReference>
<dbReference type="InterPro" id="IPR017502">
    <property type="entry name" value="Sortase_SrtB_target"/>
</dbReference>
<dbReference type="NCBIfam" id="TIGR03656">
    <property type="entry name" value="IsdC"/>
    <property type="match status" value="1"/>
</dbReference>
<dbReference type="NCBIfam" id="TIGR03063">
    <property type="entry name" value="srtB_target"/>
    <property type="match status" value="1"/>
</dbReference>
<dbReference type="PANTHER" id="PTHR37824">
    <property type="entry name" value="IRON-REGULATED SURFACE DETERMINANT PROTEIN C"/>
    <property type="match status" value="1"/>
</dbReference>
<dbReference type="PANTHER" id="PTHR37824:SF1">
    <property type="entry name" value="IRON-REGULATED SURFACE DETERMINANT PROTEIN C"/>
    <property type="match status" value="1"/>
</dbReference>
<dbReference type="Pfam" id="PF05031">
    <property type="entry name" value="NEAT"/>
    <property type="match status" value="1"/>
</dbReference>
<dbReference type="SMART" id="SM00725">
    <property type="entry name" value="NEAT"/>
    <property type="match status" value="1"/>
</dbReference>
<dbReference type="SUPFAM" id="SSF158911">
    <property type="entry name" value="NEAT domain-like"/>
    <property type="match status" value="1"/>
</dbReference>
<dbReference type="PROSITE" id="PS50978">
    <property type="entry name" value="NEAT"/>
    <property type="match status" value="1"/>
</dbReference>
<organism>
    <name type="scientific">Listeria monocytogenes serovar 1/2a (strain ATCC BAA-679 / EGD-e)</name>
    <dbReference type="NCBI Taxonomy" id="169963"/>
    <lineage>
        <taxon>Bacteria</taxon>
        <taxon>Bacillati</taxon>
        <taxon>Bacillota</taxon>
        <taxon>Bacilli</taxon>
        <taxon>Bacillales</taxon>
        <taxon>Listeriaceae</taxon>
        <taxon>Listeria</taxon>
    </lineage>
</organism>
<proteinExistence type="evidence at protein level"/>
<accession>Q8Y585</accession>
<protein>
    <recommendedName>
        <fullName evidence="7">Hemin/hemoglobin-binding protein 1</fullName>
        <shortName evidence="7">Hn/Hb-binding protein 1</shortName>
    </recommendedName>
    <alternativeName>
        <fullName evidence="8">Cell wall protein Lmo2186</fullName>
    </alternativeName>
</protein>
<reference key="1">
    <citation type="journal article" date="2001" name="Science">
        <title>Comparative genomics of Listeria species.</title>
        <authorList>
            <person name="Glaser P."/>
            <person name="Frangeul L."/>
            <person name="Buchrieser C."/>
            <person name="Rusniok C."/>
            <person name="Amend A."/>
            <person name="Baquero F."/>
            <person name="Berche P."/>
            <person name="Bloecker H."/>
            <person name="Brandt P."/>
            <person name="Chakraborty T."/>
            <person name="Charbit A."/>
            <person name="Chetouani F."/>
            <person name="Couve E."/>
            <person name="de Daruvar A."/>
            <person name="Dehoux P."/>
            <person name="Domann E."/>
            <person name="Dominguez-Bernal G."/>
            <person name="Duchaud E."/>
            <person name="Durant L."/>
            <person name="Dussurget O."/>
            <person name="Entian K.-D."/>
            <person name="Fsihi H."/>
            <person name="Garcia-del Portillo F."/>
            <person name="Garrido P."/>
            <person name="Gautier L."/>
            <person name="Goebel W."/>
            <person name="Gomez-Lopez N."/>
            <person name="Hain T."/>
            <person name="Hauf J."/>
            <person name="Jackson D."/>
            <person name="Jones L.-M."/>
            <person name="Kaerst U."/>
            <person name="Kreft J."/>
            <person name="Kuhn M."/>
            <person name="Kunst F."/>
            <person name="Kurapkat G."/>
            <person name="Madueno E."/>
            <person name="Maitournam A."/>
            <person name="Mata Vicente J."/>
            <person name="Ng E."/>
            <person name="Nedjari H."/>
            <person name="Nordsiek G."/>
            <person name="Novella S."/>
            <person name="de Pablos B."/>
            <person name="Perez-Diaz J.-C."/>
            <person name="Purcell R."/>
            <person name="Remmel B."/>
            <person name="Rose M."/>
            <person name="Schlueter T."/>
            <person name="Simoes N."/>
            <person name="Tierrez A."/>
            <person name="Vazquez-Boland J.-A."/>
            <person name="Voss H."/>
            <person name="Wehland J."/>
            <person name="Cossart P."/>
        </authorList>
    </citation>
    <scope>NUCLEOTIDE SEQUENCE [LARGE SCALE GENOMIC DNA]</scope>
    <source>
        <strain>ATCC BAA-679 / EGD-e</strain>
    </source>
</reference>
<reference key="2">
    <citation type="journal article" date="2005" name="Proteomics">
        <title>Identification of substrates of the Listeria monocytogenes sortases A and B by a non-gel proteomic analysis.</title>
        <authorList>
            <person name="Pucciarelli M.G."/>
            <person name="Calvo E."/>
            <person name="Sabet C."/>
            <person name="Bierne H."/>
            <person name="Cossart P."/>
            <person name="Garcia-del Portillo F."/>
        </authorList>
    </citation>
    <scope>PROTEIN SEQUENCE OF 68-176</scope>
    <scope>IDENTIFICATION BY MASS SPECTROMETRY</scope>
    <scope>INDUCTION</scope>
    <scope>PROCESSING BY SRTB</scope>
    <source>
        <strain>ATCC BAA-679 / EGD-e</strain>
    </source>
</reference>
<reference key="3">
    <citation type="journal article" date="2009" name="J. Biol. Chem.">
        <title>The Listeria monocytogenes sortase-B recognizes varied amino acids at position 2 of the sorting motif.</title>
        <authorList>
            <person name="Mariscotti J.F."/>
            <person name="Garcia-del Portillo F."/>
            <person name="Pucciarelli M.G."/>
        </authorList>
    </citation>
    <scope>SUBCELLULAR LOCATION</scope>
    <scope>PROCESSING BY SRTB</scope>
    <scope>MUTAGENESIS OF 170-ASN--THR-173; 175-PRO--SER-178; PRO-175; 176-LYS--SER-178 AND LYS-176</scope>
    <source>
        <strain>ATCC BAA-679 / EGD-e</strain>
    </source>
</reference>
<reference key="4">
    <citation type="journal article" date="2011" name="Mol. Microbiol.">
        <title>Sortase independent and dependent systems for acquisition of haem and haemoglobin in Listeria monocytogenes.</title>
        <authorList>
            <person name="Xiao Q."/>
            <person name="Jiang X."/>
            <person name="Moore K.J."/>
            <person name="Shao Y."/>
            <person name="Pi H."/>
            <person name="Dubail I."/>
            <person name="Charbit A."/>
            <person name="Newton S.M."/>
            <person name="Klebba P.E."/>
        </authorList>
    </citation>
    <scope>DISCUSSION OF SEQUENCE</scope>
    <source>
        <strain>ATCC BAA-679 / EGD-e</strain>
    </source>
</reference>
<reference key="5">
    <citation type="journal article" date="2014" name="J. Biol. Chem.">
        <title>Novel mechanism of hemin capture by Hbp2, the hemoglobin-binding hemophore from Listeria monocytogenes.</title>
        <authorList>
            <person name="Malmirchegini G.R."/>
            <person name="Sjodt M."/>
            <person name="Shnitkind S."/>
            <person name="Sawaya M.R."/>
            <person name="Rosinski J."/>
            <person name="Newton S.M."/>
            <person name="Klebba P.E."/>
            <person name="Clubb R.T."/>
        </authorList>
    </citation>
    <scope>FUNCTION</scope>
    <scope>HEMIN AND HEMOGLOBIN-BINDING</scope>
    <source>
        <strain>ATCC BAA-679 / EGD-e</strain>
    </source>
</reference>